<protein>
    <recommendedName>
        <fullName evidence="1">tRNA-specific 2-thiouridylase MnmA</fullName>
        <ecNumber evidence="1">2.8.1.13</ecNumber>
    </recommendedName>
</protein>
<proteinExistence type="inferred from homology"/>
<comment type="function">
    <text evidence="1">Catalyzes the 2-thiolation of uridine at the wobble position (U34) of tRNA, leading to the formation of s(2)U34.</text>
</comment>
<comment type="catalytic activity">
    <reaction evidence="1">
        <text>S-sulfanyl-L-cysteinyl-[protein] + uridine(34) in tRNA + AH2 + ATP = 2-thiouridine(34) in tRNA + L-cysteinyl-[protein] + A + AMP + diphosphate + H(+)</text>
        <dbReference type="Rhea" id="RHEA:47032"/>
        <dbReference type="Rhea" id="RHEA-COMP:10131"/>
        <dbReference type="Rhea" id="RHEA-COMP:11726"/>
        <dbReference type="Rhea" id="RHEA-COMP:11727"/>
        <dbReference type="Rhea" id="RHEA-COMP:11728"/>
        <dbReference type="ChEBI" id="CHEBI:13193"/>
        <dbReference type="ChEBI" id="CHEBI:15378"/>
        <dbReference type="ChEBI" id="CHEBI:17499"/>
        <dbReference type="ChEBI" id="CHEBI:29950"/>
        <dbReference type="ChEBI" id="CHEBI:30616"/>
        <dbReference type="ChEBI" id="CHEBI:33019"/>
        <dbReference type="ChEBI" id="CHEBI:61963"/>
        <dbReference type="ChEBI" id="CHEBI:65315"/>
        <dbReference type="ChEBI" id="CHEBI:87170"/>
        <dbReference type="ChEBI" id="CHEBI:456215"/>
        <dbReference type="EC" id="2.8.1.13"/>
    </reaction>
</comment>
<comment type="subcellular location">
    <subcellularLocation>
        <location evidence="1">Cytoplasm</location>
    </subcellularLocation>
</comment>
<comment type="similarity">
    <text evidence="1">Belongs to the MnmA/TRMU family.</text>
</comment>
<comment type="sequence caution" evidence="2">
    <conflict type="erroneous initiation">
        <sequence resource="EMBL-CDS" id="ABA58500"/>
    </conflict>
</comment>
<reference key="1">
    <citation type="journal article" date="2006" name="Appl. Environ. Microbiol.">
        <title>Complete genome sequence of the marine, chemolithoautotrophic, ammonia-oxidizing bacterium Nitrosococcus oceani ATCC 19707.</title>
        <authorList>
            <person name="Klotz M.G."/>
            <person name="Arp D.J."/>
            <person name="Chain P.S.G."/>
            <person name="El-Sheikh A.F."/>
            <person name="Hauser L.J."/>
            <person name="Hommes N.G."/>
            <person name="Larimer F.W."/>
            <person name="Malfatti S.A."/>
            <person name="Norton J.M."/>
            <person name="Poret-Peterson A.T."/>
            <person name="Vergez L.M."/>
            <person name="Ward B.B."/>
        </authorList>
    </citation>
    <scope>NUCLEOTIDE SEQUENCE [LARGE SCALE GENOMIC DNA]</scope>
    <source>
        <strain>ATCC 19707 / BCRC 17464 / JCM 30415 / NCIMB 11848 / C-107</strain>
    </source>
</reference>
<sequence>MNKPKVVVGLSGGVDSSVAALRLQQQGYPTSGLFMKNWVDFADESECTVAQDREDAQAVTSLLGISFHEANFAMEYWDRVFHYFLEEYRLGRTPNPDILCNREIKFKTFLDHALALGNTLIATGHYARIDQKEGRYRLLKGRDKNKDQSYFLYTLGQKQLSHTLFPLGELEKPQVRRIAIQARLPNHSKKDSTGICFIGERRFKEFLSRYLPAQPGEMRTPDKEWIGQHDGLMYYTLGQRRGLGIGGRKNSNGAPWFVVGKNLPQNTLYVAQGRHHPWLKSLILEANQLHWVAGHPPPLPYSCTAKIRYRQTDQHCTLTAIANGYIKVIFNAPQYAATPGQAIVFYQDDECLGGGTITTTDALGIQS</sequence>
<name>MNMA_NITOC</name>
<feature type="chain" id="PRO_0000349717" description="tRNA-specific 2-thiouridylase MnmA">
    <location>
        <begin position="1"/>
        <end position="367"/>
    </location>
</feature>
<feature type="region of interest" description="Interaction with target base in tRNA" evidence="1">
    <location>
        <begin position="95"/>
        <end position="97"/>
    </location>
</feature>
<feature type="region of interest" description="Interaction with tRNA" evidence="1">
    <location>
        <begin position="146"/>
        <end position="148"/>
    </location>
</feature>
<feature type="region of interest" description="Interaction with tRNA" evidence="1">
    <location>
        <begin position="308"/>
        <end position="309"/>
    </location>
</feature>
<feature type="active site" description="Nucleophile" evidence="1">
    <location>
        <position position="100"/>
    </location>
</feature>
<feature type="active site" description="Cysteine persulfide intermediate" evidence="1">
    <location>
        <position position="196"/>
    </location>
</feature>
<feature type="binding site" evidence="1">
    <location>
        <begin position="9"/>
        <end position="16"/>
    </location>
    <ligand>
        <name>ATP</name>
        <dbReference type="ChEBI" id="CHEBI:30616"/>
    </ligand>
</feature>
<feature type="binding site" evidence="1">
    <location>
        <position position="35"/>
    </location>
    <ligand>
        <name>ATP</name>
        <dbReference type="ChEBI" id="CHEBI:30616"/>
    </ligand>
</feature>
<feature type="binding site" evidence="1">
    <location>
        <position position="124"/>
    </location>
    <ligand>
        <name>ATP</name>
        <dbReference type="ChEBI" id="CHEBI:30616"/>
    </ligand>
</feature>
<feature type="site" description="Interaction with tRNA" evidence="1">
    <location>
        <position position="125"/>
    </location>
</feature>
<feature type="site" description="Interaction with tRNA" evidence="1">
    <location>
        <position position="341"/>
    </location>
</feature>
<feature type="disulfide bond" description="Alternate" evidence="1">
    <location>
        <begin position="100"/>
        <end position="196"/>
    </location>
</feature>
<keyword id="KW-0067">ATP-binding</keyword>
<keyword id="KW-0963">Cytoplasm</keyword>
<keyword id="KW-1015">Disulfide bond</keyword>
<keyword id="KW-0547">Nucleotide-binding</keyword>
<keyword id="KW-1185">Reference proteome</keyword>
<keyword id="KW-0694">RNA-binding</keyword>
<keyword id="KW-0808">Transferase</keyword>
<keyword id="KW-0819">tRNA processing</keyword>
<keyword id="KW-0820">tRNA-binding</keyword>
<dbReference type="EC" id="2.8.1.13" evidence="1"/>
<dbReference type="EMBL" id="CP000127">
    <property type="protein sequence ID" value="ABA58500.1"/>
    <property type="status" value="ALT_INIT"/>
    <property type="molecule type" value="Genomic_DNA"/>
</dbReference>
<dbReference type="RefSeq" id="WP_002810772.1">
    <property type="nucleotide sequence ID" value="NC_007484.1"/>
</dbReference>
<dbReference type="SMR" id="Q3J9J6"/>
<dbReference type="FunCoup" id="Q3J9J6">
    <property type="interactions" value="581"/>
</dbReference>
<dbReference type="STRING" id="323261.Noc_2040"/>
<dbReference type="KEGG" id="noc:Noc_2040"/>
<dbReference type="eggNOG" id="COG0482">
    <property type="taxonomic scope" value="Bacteria"/>
</dbReference>
<dbReference type="HOGENOM" id="CLU_035188_1_0_6"/>
<dbReference type="InParanoid" id="Q3J9J6"/>
<dbReference type="Proteomes" id="UP000006838">
    <property type="component" value="Chromosome"/>
</dbReference>
<dbReference type="GO" id="GO:0005737">
    <property type="term" value="C:cytoplasm"/>
    <property type="evidence" value="ECO:0007669"/>
    <property type="project" value="UniProtKB-SubCell"/>
</dbReference>
<dbReference type="GO" id="GO:0005524">
    <property type="term" value="F:ATP binding"/>
    <property type="evidence" value="ECO:0007669"/>
    <property type="project" value="UniProtKB-KW"/>
</dbReference>
<dbReference type="GO" id="GO:0000049">
    <property type="term" value="F:tRNA binding"/>
    <property type="evidence" value="ECO:0007669"/>
    <property type="project" value="UniProtKB-KW"/>
</dbReference>
<dbReference type="GO" id="GO:0103016">
    <property type="term" value="F:tRNA-uridine 2-sulfurtransferase activity"/>
    <property type="evidence" value="ECO:0007669"/>
    <property type="project" value="UniProtKB-EC"/>
</dbReference>
<dbReference type="GO" id="GO:0002143">
    <property type="term" value="P:tRNA wobble position uridine thiolation"/>
    <property type="evidence" value="ECO:0007669"/>
    <property type="project" value="TreeGrafter"/>
</dbReference>
<dbReference type="CDD" id="cd01998">
    <property type="entry name" value="MnmA_TRMU-like"/>
    <property type="match status" value="1"/>
</dbReference>
<dbReference type="FunFam" id="2.30.30.280:FF:000001">
    <property type="entry name" value="tRNA-specific 2-thiouridylase MnmA"/>
    <property type="match status" value="1"/>
</dbReference>
<dbReference type="FunFam" id="2.40.30.10:FF:000023">
    <property type="entry name" value="tRNA-specific 2-thiouridylase MnmA"/>
    <property type="match status" value="1"/>
</dbReference>
<dbReference type="FunFam" id="3.40.50.620:FF:000004">
    <property type="entry name" value="tRNA-specific 2-thiouridylase MnmA"/>
    <property type="match status" value="1"/>
</dbReference>
<dbReference type="Gene3D" id="2.30.30.280">
    <property type="entry name" value="Adenine nucleotide alpha hydrolases-like domains"/>
    <property type="match status" value="1"/>
</dbReference>
<dbReference type="Gene3D" id="3.40.50.620">
    <property type="entry name" value="HUPs"/>
    <property type="match status" value="1"/>
</dbReference>
<dbReference type="Gene3D" id="2.40.30.10">
    <property type="entry name" value="Translation factors"/>
    <property type="match status" value="1"/>
</dbReference>
<dbReference type="HAMAP" id="MF_00144">
    <property type="entry name" value="tRNA_thiouridyl_MnmA"/>
    <property type="match status" value="1"/>
</dbReference>
<dbReference type="InterPro" id="IPR004506">
    <property type="entry name" value="MnmA-like"/>
</dbReference>
<dbReference type="InterPro" id="IPR046885">
    <property type="entry name" value="MnmA-like_C"/>
</dbReference>
<dbReference type="InterPro" id="IPR046884">
    <property type="entry name" value="MnmA-like_central"/>
</dbReference>
<dbReference type="InterPro" id="IPR023382">
    <property type="entry name" value="MnmA-like_central_sf"/>
</dbReference>
<dbReference type="InterPro" id="IPR014729">
    <property type="entry name" value="Rossmann-like_a/b/a_fold"/>
</dbReference>
<dbReference type="NCBIfam" id="NF001138">
    <property type="entry name" value="PRK00143.1"/>
    <property type="match status" value="1"/>
</dbReference>
<dbReference type="NCBIfam" id="TIGR00420">
    <property type="entry name" value="trmU"/>
    <property type="match status" value="1"/>
</dbReference>
<dbReference type="PANTHER" id="PTHR11933:SF5">
    <property type="entry name" value="MITOCHONDRIAL TRNA-SPECIFIC 2-THIOURIDYLASE 1"/>
    <property type="match status" value="1"/>
</dbReference>
<dbReference type="PANTHER" id="PTHR11933">
    <property type="entry name" value="TRNA 5-METHYLAMINOMETHYL-2-THIOURIDYLATE -METHYLTRANSFERASE"/>
    <property type="match status" value="1"/>
</dbReference>
<dbReference type="Pfam" id="PF03054">
    <property type="entry name" value="tRNA_Me_trans"/>
    <property type="match status" value="1"/>
</dbReference>
<dbReference type="Pfam" id="PF20258">
    <property type="entry name" value="tRNA_Me_trans_C"/>
    <property type="match status" value="1"/>
</dbReference>
<dbReference type="Pfam" id="PF20259">
    <property type="entry name" value="tRNA_Me_trans_M"/>
    <property type="match status" value="1"/>
</dbReference>
<dbReference type="SUPFAM" id="SSF52402">
    <property type="entry name" value="Adenine nucleotide alpha hydrolases-like"/>
    <property type="match status" value="1"/>
</dbReference>
<organism>
    <name type="scientific">Nitrosococcus oceani (strain ATCC 19707 / BCRC 17464 / JCM 30415 / NCIMB 11848 / C-107)</name>
    <dbReference type="NCBI Taxonomy" id="323261"/>
    <lineage>
        <taxon>Bacteria</taxon>
        <taxon>Pseudomonadati</taxon>
        <taxon>Pseudomonadota</taxon>
        <taxon>Gammaproteobacteria</taxon>
        <taxon>Chromatiales</taxon>
        <taxon>Chromatiaceae</taxon>
        <taxon>Nitrosococcus</taxon>
    </lineage>
</organism>
<evidence type="ECO:0000255" key="1">
    <source>
        <dbReference type="HAMAP-Rule" id="MF_00144"/>
    </source>
</evidence>
<evidence type="ECO:0000305" key="2"/>
<accession>Q3J9J6</accession>
<gene>
    <name evidence="1" type="primary">mnmA</name>
    <name type="ordered locus">Noc_2040</name>
</gene>